<gene>
    <name evidence="1" type="primary">pdxH</name>
    <name type="ordered locus">MRA_2635</name>
</gene>
<dbReference type="EC" id="1.4.3.5" evidence="1"/>
<dbReference type="EMBL" id="CP000611">
    <property type="protein sequence ID" value="ABQ74408.1"/>
    <property type="molecule type" value="Genomic_DNA"/>
</dbReference>
<dbReference type="RefSeq" id="WP_003413471.1">
    <property type="nucleotide sequence ID" value="NZ_CP016972.1"/>
</dbReference>
<dbReference type="SMR" id="A5U5V8"/>
<dbReference type="GeneID" id="45426610"/>
<dbReference type="KEGG" id="mra:MRA_2635"/>
<dbReference type="eggNOG" id="COG0259">
    <property type="taxonomic scope" value="Bacteria"/>
</dbReference>
<dbReference type="HOGENOM" id="CLU_032263_2_2_11"/>
<dbReference type="UniPathway" id="UPA01068">
    <property type="reaction ID" value="UER00304"/>
</dbReference>
<dbReference type="UniPathway" id="UPA01068">
    <property type="reaction ID" value="UER00305"/>
</dbReference>
<dbReference type="Proteomes" id="UP000001988">
    <property type="component" value="Chromosome"/>
</dbReference>
<dbReference type="GO" id="GO:0010181">
    <property type="term" value="F:FMN binding"/>
    <property type="evidence" value="ECO:0007669"/>
    <property type="project" value="UniProtKB-UniRule"/>
</dbReference>
<dbReference type="GO" id="GO:0004733">
    <property type="term" value="F:pyridoxamine phosphate oxidase activity"/>
    <property type="evidence" value="ECO:0007669"/>
    <property type="project" value="UniProtKB-UniRule"/>
</dbReference>
<dbReference type="GO" id="GO:0008615">
    <property type="term" value="P:pyridoxine biosynthetic process"/>
    <property type="evidence" value="ECO:0007669"/>
    <property type="project" value="UniProtKB-KW"/>
</dbReference>
<dbReference type="FunFam" id="2.30.110.10:FF:000021">
    <property type="entry name" value="Pyridoxine 5'-phosphate oxidase"/>
    <property type="match status" value="1"/>
</dbReference>
<dbReference type="Gene3D" id="2.30.110.10">
    <property type="entry name" value="Electron Transport, Fmn-binding Protein, Chain A"/>
    <property type="match status" value="1"/>
</dbReference>
<dbReference type="HAMAP" id="MF_01629">
    <property type="entry name" value="PdxH"/>
    <property type="match status" value="1"/>
</dbReference>
<dbReference type="InterPro" id="IPR000659">
    <property type="entry name" value="Pyridox_Oxase"/>
</dbReference>
<dbReference type="InterPro" id="IPR019740">
    <property type="entry name" value="Pyridox_Oxase_CS"/>
</dbReference>
<dbReference type="InterPro" id="IPR011576">
    <property type="entry name" value="Pyridox_Oxase_N"/>
</dbReference>
<dbReference type="InterPro" id="IPR019576">
    <property type="entry name" value="Pyridoxamine_oxidase_dimer_C"/>
</dbReference>
<dbReference type="InterPro" id="IPR012349">
    <property type="entry name" value="Split_barrel_FMN-bd"/>
</dbReference>
<dbReference type="NCBIfam" id="TIGR00558">
    <property type="entry name" value="pdxH"/>
    <property type="match status" value="1"/>
</dbReference>
<dbReference type="NCBIfam" id="NF004231">
    <property type="entry name" value="PRK05679.1"/>
    <property type="match status" value="1"/>
</dbReference>
<dbReference type="PANTHER" id="PTHR10851:SF0">
    <property type="entry name" value="PYRIDOXINE-5'-PHOSPHATE OXIDASE"/>
    <property type="match status" value="1"/>
</dbReference>
<dbReference type="PANTHER" id="PTHR10851">
    <property type="entry name" value="PYRIDOXINE-5-PHOSPHATE OXIDASE"/>
    <property type="match status" value="1"/>
</dbReference>
<dbReference type="Pfam" id="PF10590">
    <property type="entry name" value="PNP_phzG_C"/>
    <property type="match status" value="1"/>
</dbReference>
<dbReference type="Pfam" id="PF01243">
    <property type="entry name" value="PNPOx_N"/>
    <property type="match status" value="1"/>
</dbReference>
<dbReference type="PIRSF" id="PIRSF000190">
    <property type="entry name" value="Pyd_amn-ph_oxd"/>
    <property type="match status" value="1"/>
</dbReference>
<dbReference type="SUPFAM" id="SSF50475">
    <property type="entry name" value="FMN-binding split barrel"/>
    <property type="match status" value="1"/>
</dbReference>
<dbReference type="PROSITE" id="PS01064">
    <property type="entry name" value="PYRIDOX_OXIDASE"/>
    <property type="match status" value="1"/>
</dbReference>
<proteinExistence type="inferred from homology"/>
<name>PDXH_MYCTA</name>
<comment type="function">
    <text evidence="1">Catalyzes the oxidation of either pyridoxine 5'-phosphate (PNP) or pyridoxamine 5'-phosphate (PMP) into pyridoxal 5'-phosphate (PLP).</text>
</comment>
<comment type="catalytic activity">
    <reaction evidence="1">
        <text>pyridoxamine 5'-phosphate + O2 + H2O = pyridoxal 5'-phosphate + H2O2 + NH4(+)</text>
        <dbReference type="Rhea" id="RHEA:15817"/>
        <dbReference type="ChEBI" id="CHEBI:15377"/>
        <dbReference type="ChEBI" id="CHEBI:15379"/>
        <dbReference type="ChEBI" id="CHEBI:16240"/>
        <dbReference type="ChEBI" id="CHEBI:28938"/>
        <dbReference type="ChEBI" id="CHEBI:58451"/>
        <dbReference type="ChEBI" id="CHEBI:597326"/>
        <dbReference type="EC" id="1.4.3.5"/>
    </reaction>
</comment>
<comment type="catalytic activity">
    <reaction evidence="1">
        <text>pyridoxine 5'-phosphate + O2 = pyridoxal 5'-phosphate + H2O2</text>
        <dbReference type="Rhea" id="RHEA:15149"/>
        <dbReference type="ChEBI" id="CHEBI:15379"/>
        <dbReference type="ChEBI" id="CHEBI:16240"/>
        <dbReference type="ChEBI" id="CHEBI:58589"/>
        <dbReference type="ChEBI" id="CHEBI:597326"/>
        <dbReference type="EC" id="1.4.3.5"/>
    </reaction>
</comment>
<comment type="cofactor">
    <cofactor evidence="1">
        <name>FMN</name>
        <dbReference type="ChEBI" id="CHEBI:58210"/>
    </cofactor>
    <text evidence="1">Binds 1 FMN per subunit.</text>
</comment>
<comment type="pathway">
    <text evidence="1">Cofactor metabolism; pyridoxal 5'-phosphate salvage; pyridoxal 5'-phosphate from pyridoxamine 5'-phosphate: step 1/1.</text>
</comment>
<comment type="pathway">
    <text evidence="1">Cofactor metabolism; pyridoxal 5'-phosphate salvage; pyridoxal 5'-phosphate from pyridoxine 5'-phosphate: step 1/1.</text>
</comment>
<comment type="subunit">
    <text evidence="1">Homodimer.</text>
</comment>
<comment type="similarity">
    <text evidence="1">Belongs to the pyridoxamine 5'-phosphate oxidase family.</text>
</comment>
<sequence>MDDDAQMVAIDKDQLARMRGEYGPEKDGCGDLDFDWLDDGWLTLLRRWLNDAQRAGVSEPNAMVLATVADGKPVTRSVLCKILDESGVAFFTSYTSAKGEQLAVTPYASATFPWYQLGRQAHVQGPVSKVSTEEIFTYWSMRPRGAQLGAWASQQSRPVGSRAQLDNQLAEVTRRFADQDQIPVPPGWGGYRIAPEIVEFWQGRENRMHNRIRVANGRLERLQP</sequence>
<accession>A5U5V8</accession>
<feature type="chain" id="PRO_1000069696" description="Pyridoxine/pyridoxamine 5'-phosphate oxidase">
    <location>
        <begin position="1"/>
        <end position="224"/>
    </location>
</feature>
<feature type="binding site" evidence="1">
    <location>
        <begin position="19"/>
        <end position="22"/>
    </location>
    <ligand>
        <name>substrate</name>
    </ligand>
</feature>
<feature type="binding site" evidence="1">
    <location>
        <begin position="76"/>
        <end position="81"/>
    </location>
    <ligand>
        <name>FMN</name>
        <dbReference type="ChEBI" id="CHEBI:58210"/>
    </ligand>
</feature>
<feature type="binding site" evidence="1">
    <location>
        <position position="81"/>
    </location>
    <ligand>
        <name>substrate</name>
    </ligand>
</feature>
<feature type="binding site" evidence="1">
    <location>
        <begin position="91"/>
        <end position="92"/>
    </location>
    <ligand>
        <name>FMN</name>
        <dbReference type="ChEBI" id="CHEBI:58210"/>
    </ligand>
</feature>
<feature type="binding site" evidence="1">
    <location>
        <position position="98"/>
    </location>
    <ligand>
        <name>FMN</name>
        <dbReference type="ChEBI" id="CHEBI:58210"/>
    </ligand>
</feature>
<feature type="binding site" evidence="1">
    <location>
        <position position="120"/>
    </location>
    <ligand>
        <name>FMN</name>
        <dbReference type="ChEBI" id="CHEBI:58210"/>
    </ligand>
</feature>
<feature type="binding site" evidence="1">
    <location>
        <position position="138"/>
    </location>
    <ligand>
        <name>substrate</name>
    </ligand>
</feature>
<feature type="binding site" evidence="1">
    <location>
        <position position="142"/>
    </location>
    <ligand>
        <name>substrate</name>
    </ligand>
</feature>
<feature type="binding site" evidence="1">
    <location>
        <begin position="155"/>
        <end position="156"/>
    </location>
    <ligand>
        <name>FMN</name>
        <dbReference type="ChEBI" id="CHEBI:58210"/>
    </ligand>
</feature>
<feature type="binding site" evidence="1">
    <location>
        <position position="201"/>
    </location>
    <ligand>
        <name>FMN</name>
        <dbReference type="ChEBI" id="CHEBI:58210"/>
    </ligand>
</feature>
<feature type="binding site" evidence="1">
    <location>
        <begin position="207"/>
        <end position="209"/>
    </location>
    <ligand>
        <name>substrate</name>
    </ligand>
</feature>
<feature type="binding site" evidence="1">
    <location>
        <position position="211"/>
    </location>
    <ligand>
        <name>FMN</name>
        <dbReference type="ChEBI" id="CHEBI:58210"/>
    </ligand>
</feature>
<organism>
    <name type="scientific">Mycobacterium tuberculosis (strain ATCC 25177 / H37Ra)</name>
    <dbReference type="NCBI Taxonomy" id="419947"/>
    <lineage>
        <taxon>Bacteria</taxon>
        <taxon>Bacillati</taxon>
        <taxon>Actinomycetota</taxon>
        <taxon>Actinomycetes</taxon>
        <taxon>Mycobacteriales</taxon>
        <taxon>Mycobacteriaceae</taxon>
        <taxon>Mycobacterium</taxon>
        <taxon>Mycobacterium tuberculosis complex</taxon>
    </lineage>
</organism>
<reference key="1">
    <citation type="journal article" date="2008" name="PLoS ONE">
        <title>Genetic basis of virulence attenuation revealed by comparative genomic analysis of Mycobacterium tuberculosis strain H37Ra versus H37Rv.</title>
        <authorList>
            <person name="Zheng H."/>
            <person name="Lu L."/>
            <person name="Wang B."/>
            <person name="Pu S."/>
            <person name="Zhang X."/>
            <person name="Zhu G."/>
            <person name="Shi W."/>
            <person name="Zhang L."/>
            <person name="Wang H."/>
            <person name="Wang S."/>
            <person name="Zhao G."/>
            <person name="Zhang Y."/>
        </authorList>
    </citation>
    <scope>NUCLEOTIDE SEQUENCE [LARGE SCALE GENOMIC DNA]</scope>
    <source>
        <strain>ATCC 25177 / H37Ra</strain>
    </source>
</reference>
<protein>
    <recommendedName>
        <fullName evidence="1">Pyridoxine/pyridoxamine 5'-phosphate oxidase</fullName>
        <ecNumber evidence="1">1.4.3.5</ecNumber>
    </recommendedName>
    <alternativeName>
        <fullName evidence="1">PNP/PMP oxidase</fullName>
        <shortName evidence="1">PNPOx</shortName>
    </alternativeName>
    <alternativeName>
        <fullName evidence="1">Pyridoxal 5'-phosphate synthase</fullName>
    </alternativeName>
</protein>
<evidence type="ECO:0000255" key="1">
    <source>
        <dbReference type="HAMAP-Rule" id="MF_01629"/>
    </source>
</evidence>
<keyword id="KW-0285">Flavoprotein</keyword>
<keyword id="KW-0288">FMN</keyword>
<keyword id="KW-0560">Oxidoreductase</keyword>
<keyword id="KW-0664">Pyridoxine biosynthesis</keyword>
<keyword id="KW-1185">Reference proteome</keyword>